<feature type="chain" id="PRO_0000078335" description="Major heat shock 70 kDa protein Bc">
    <location>
        <begin position="1"/>
        <end position="641"/>
    </location>
</feature>
<feature type="region of interest" description="Disordered" evidence="1">
    <location>
        <begin position="609"/>
        <end position="641"/>
    </location>
</feature>
<feature type="compositionally biased region" description="Gly residues" evidence="1">
    <location>
        <begin position="613"/>
        <end position="633"/>
    </location>
</feature>
<feature type="sequence variant" description="In strain: 3CPA81.">
    <original>E</original>
    <variation>A</variation>
    <location>
        <position position="45"/>
    </location>
</feature>
<feature type="sequence variant" description="In strain: 3CPA2.">
    <original>K</original>
    <variation>R</variation>
    <location>
        <position position="74"/>
    </location>
</feature>
<feature type="sequence variant" description="In strain: FrV3-1.">
    <original>S</original>
    <variation>I</variation>
    <location>
        <position position="93"/>
    </location>
</feature>
<feature type="sequence variant" description="In strain: 3CPA2.">
    <original>S</original>
    <variation>G</variation>
    <location>
        <position position="135"/>
    </location>
</feature>
<feature type="sequence variant" description="In strain: 3CPA2.">
    <original>K</original>
    <variation>N</variation>
    <location>
        <position position="187"/>
    </location>
</feature>
<feature type="sequence variant" description="In strain: AUS.">
    <original>D</original>
    <variation>Y</variation>
    <location>
        <position position="210"/>
    </location>
</feature>
<feature type="sequence variant" description="In strain: 3CPA43 and 3CPA81.">
    <original>H</original>
    <variation>N</variation>
    <location>
        <position position="330"/>
    </location>
</feature>
<feature type="sequence variant" description="In strain: 3CPA43.">
    <original>P</original>
    <variation>S</variation>
    <location>
        <position position="342"/>
    </location>
</feature>
<feature type="sequence variant" description="In strain: 3CPA43 and 3CPA81.">
    <original>D</original>
    <variation>Y</variation>
    <location>
        <position position="458"/>
    </location>
</feature>
<feature type="sequence variant" description="In strain: B28.">
    <original>T</original>
    <variation>I</variation>
    <location>
        <position position="475"/>
    </location>
</feature>
<feature type="sequence variant" description="In strain: 3CPA126.">
    <original>S</original>
    <variation>P</variation>
    <location>
        <position position="601"/>
    </location>
</feature>
<feature type="sequence variant" description="In strain: AUS.">
    <original>G</original>
    <variation>R</variation>
    <location>
        <position position="634"/>
    </location>
</feature>
<gene>
    <name type="primary">Hsp70Bc</name>
    <name type="ORF">CG6489</name>
</gene>
<name>HSP75_DROME</name>
<comment type="function">
    <text evidence="3">Stress-response chaperone protein that prevents toxic aggregation of proteins.</text>
</comment>
<comment type="subunit">
    <text evidence="2">Forms a complex with Hsp83/Hsp90 and Dpit47.</text>
</comment>
<comment type="induction">
    <text evidence="3">Heat shock induces the synthesis of seven proteins at five otherwise inactive sites in the polytene chromosomes of fruit fly larvae. Two separate sites, producing two and three copies, respectively, code for the 70 kDa protein. Expression is induced by proteotoxic stress caused by toxic protein aggregation, for example by overexpressed Atx-1/ataxin-1 (PubMed:18344983).</text>
</comment>
<comment type="miscellaneous">
    <text evidence="4">There are 5 or 6 copies of the gene encoding this protein at two separate loci, 2 copies at chromosome locus 87A7 in reverse orientation (Hsp70Aa and Hsp70Ab) at locus 87A7, and 3 or 4 copies (depending on strain) at locus 87C1. Most strains have three copies at chromosome locus 87C1; two tandemly repeated Hsp70 genes (Hsp70Bb and Hsp70Bc) and one in reverse orientation (Hsp70Ba). Some strains, including that sequenced in the Drosophila genome project have an additional copy making three tandemly repeated Hsp70 genes (Hsp70Bb, Hsp70Bbb and Hsp70Bc).</text>
</comment>
<comment type="similarity">
    <text evidence="4">Belongs to the heat shock protein 70 family.</text>
</comment>
<keyword id="KW-0067">ATP-binding</keyword>
<keyword id="KW-0547">Nucleotide-binding</keyword>
<keyword id="KW-1185">Reference proteome</keyword>
<keyword id="KW-0346">Stress response</keyword>
<organism>
    <name type="scientific">Drosophila melanogaster</name>
    <name type="common">Fruit fly</name>
    <dbReference type="NCBI Taxonomy" id="7227"/>
    <lineage>
        <taxon>Eukaryota</taxon>
        <taxon>Metazoa</taxon>
        <taxon>Ecdysozoa</taxon>
        <taxon>Arthropoda</taxon>
        <taxon>Hexapoda</taxon>
        <taxon>Insecta</taxon>
        <taxon>Pterygota</taxon>
        <taxon>Neoptera</taxon>
        <taxon>Endopterygota</taxon>
        <taxon>Diptera</taxon>
        <taxon>Brachycera</taxon>
        <taxon>Muscomorpha</taxon>
        <taxon>Ephydroidea</taxon>
        <taxon>Drosophilidae</taxon>
        <taxon>Drosophila</taxon>
        <taxon>Sophophora</taxon>
    </lineage>
</organism>
<proteinExistence type="evidence at protein level"/>
<sequence>MPAIGIDLGTTYSCVGVYQHGKVEIIANDQGNRTTPSYVAFTDSERLIGDPAKNQVAMNPRNTVFDAKRLIGRKYDDPKIAEDMKHWPFKVVSDGGKPKIGVEYKGESKRFAPEEISSMVLTKMKETAEAYLGESITDAVITVPAYFNDSQRQATKDAGHIAGLNVLRIINEPTAAALAYGLDKNLKGERNVLIFDLGGGTFDVSILTIDEGSLFEVRSTAGDTHLGGEDFDNRLVTHLAEEFKRKYKKDLRSNPRALRRLRTAAERAKRTLSSSTEATIEIDALFEGQDFYTKVSRARFEELCADLFRNTLQPVEKALNDAKMDKGQIHDIVLVGGSTRIPKVQSLLQEFFHGKNLNLSINPDEAVAYGAAVQAAILSGDQSGKIQDVLLVDVAPLSLGIETAGGVMTKLIERNCRIPCKQTKTFSTYSDNQPGVSIQVYEGERAMTKDNNALGTFDLSGIPPAPRGVPQIEVTFDLDANGILNVSAKEMSTGKAKNITIKNDKGRLSQAEIDRMVNEAEKYADEDEKHRQRITSRNALESYVFNVKQSVEQAPAGKLDEADKNSVLDKCNETIRWLDSNTTAEKEEFDHKMEELTRHCSPIMTKMHQQGAGAAGGPGANCGQQAGGFGGYSGPTVEEVD</sequence>
<protein>
    <recommendedName>
        <fullName>Major heat shock 70 kDa protein Bc</fullName>
        <shortName>Heat shock protein 70Bc</shortName>
    </recommendedName>
    <alternativeName>
        <fullName>HSP70-87C1</fullName>
    </alternativeName>
</protein>
<dbReference type="EMBL" id="AF295958">
    <property type="protein sequence ID" value="AAG26912.1"/>
    <property type="molecule type" value="Genomic_DNA"/>
</dbReference>
<dbReference type="EMBL" id="AF295959">
    <property type="protein sequence ID" value="AAG26913.1"/>
    <property type="molecule type" value="Genomic_DNA"/>
</dbReference>
<dbReference type="EMBL" id="AF295960">
    <property type="protein sequence ID" value="AAG26914.1"/>
    <property type="molecule type" value="Genomic_DNA"/>
</dbReference>
<dbReference type="EMBL" id="AF295961">
    <property type="protein sequence ID" value="AAG26915.1"/>
    <property type="molecule type" value="Genomic_DNA"/>
</dbReference>
<dbReference type="EMBL" id="AF295962">
    <property type="protein sequence ID" value="AAG26916.1"/>
    <property type="molecule type" value="Genomic_DNA"/>
</dbReference>
<dbReference type="EMBL" id="AF350484">
    <property type="protein sequence ID" value="AAK30241.1"/>
    <property type="molecule type" value="Genomic_DNA"/>
</dbReference>
<dbReference type="EMBL" id="AF350485">
    <property type="protein sequence ID" value="AAK30242.1"/>
    <property type="molecule type" value="Genomic_DNA"/>
</dbReference>
<dbReference type="EMBL" id="AF350486">
    <property type="protein sequence ID" value="AAK30243.1"/>
    <property type="molecule type" value="Genomic_DNA"/>
</dbReference>
<dbReference type="EMBL" id="AF350487">
    <property type="protein sequence ID" value="AAK30244.1"/>
    <property type="molecule type" value="Genomic_DNA"/>
</dbReference>
<dbReference type="EMBL" id="AF350488">
    <property type="protein sequence ID" value="AAK30245.1"/>
    <property type="molecule type" value="Genomic_DNA"/>
</dbReference>
<dbReference type="EMBL" id="AF350489">
    <property type="protein sequence ID" value="AAK30246.1"/>
    <property type="molecule type" value="Genomic_DNA"/>
</dbReference>
<dbReference type="EMBL" id="AF350490">
    <property type="protein sequence ID" value="AAK30247.1"/>
    <property type="molecule type" value="Genomic_DNA"/>
</dbReference>
<dbReference type="EMBL" id="AF350491">
    <property type="protein sequence ID" value="AAK30248.1"/>
    <property type="molecule type" value="Genomic_DNA"/>
</dbReference>
<dbReference type="EMBL" id="AE014297">
    <property type="protein sequence ID" value="AAG22149.2"/>
    <property type="molecule type" value="Genomic_DNA"/>
</dbReference>
<dbReference type="EMBL" id="BT011541">
    <property type="protein sequence ID" value="AAS15677.1"/>
    <property type="molecule type" value="mRNA"/>
</dbReference>
<dbReference type="EMBL" id="J01104">
    <property type="protein sequence ID" value="AAD15227.1"/>
    <property type="molecule type" value="Genomic_DNA"/>
</dbReference>
<dbReference type="PIR" id="A03307">
    <property type="entry name" value="HHFF72"/>
</dbReference>
<dbReference type="RefSeq" id="NP_650209.1">
    <property type="nucleotide sequence ID" value="NM_141952.2"/>
</dbReference>
<dbReference type="SMR" id="Q9BIR7"/>
<dbReference type="BioGRID" id="71512">
    <property type="interactions" value="47"/>
</dbReference>
<dbReference type="BioGRID" id="71513">
    <property type="interactions" value="47"/>
</dbReference>
<dbReference type="FunCoup" id="Q9BIR7">
    <property type="interactions" value="363"/>
</dbReference>
<dbReference type="GlyGen" id="Q9BIR7">
    <property type="glycosylation" value="1 site"/>
</dbReference>
<dbReference type="DNASU" id="48583"/>
<dbReference type="EnsemblMetazoa" id="FBtr0082637">
    <property type="protein sequence ID" value="FBpp0082106"/>
    <property type="gene ID" value="FBgn0013278"/>
</dbReference>
<dbReference type="EnsemblMetazoa" id="FBtr0082638">
    <property type="protein sequence ID" value="FBpp0082107"/>
    <property type="gene ID" value="FBgn0013279"/>
</dbReference>
<dbReference type="GeneID" id="48582"/>
<dbReference type="GeneID" id="48583"/>
<dbReference type="KEGG" id="dme:Dmel_CG31359"/>
<dbReference type="KEGG" id="dme:Dmel_CG6489"/>
<dbReference type="AGR" id="FB:FBgn0013279"/>
<dbReference type="CTD" id="48582"/>
<dbReference type="CTD" id="48583"/>
<dbReference type="FlyBase" id="FBgn0013279">
    <property type="gene designation" value="Hsp70Bc"/>
</dbReference>
<dbReference type="VEuPathDB" id="VectorBase:FBgn0013278"/>
<dbReference type="VEuPathDB" id="VectorBase:FBgn0013279"/>
<dbReference type="HOGENOM" id="CLU_005965_3_0_1"/>
<dbReference type="InParanoid" id="Q9BIR7"/>
<dbReference type="OMA" id="KEECEHR"/>
<dbReference type="OrthoDB" id="7877850at2759"/>
<dbReference type="PhylomeDB" id="Q9BIR7"/>
<dbReference type="Reactome" id="R-DME-3371497">
    <property type="pathway name" value="HSP90 chaperone cycle for steroid hormone receptors (SHR) in the presence of ligand"/>
</dbReference>
<dbReference type="BioGRID-ORCS" id="48582">
    <property type="hits" value="0 hits in 3 CRISPR screens"/>
</dbReference>
<dbReference type="BioGRID-ORCS" id="48583">
    <property type="hits" value="0 hits in 3 CRISPR screens"/>
</dbReference>
<dbReference type="PRO" id="PR:Q9BIR7"/>
<dbReference type="Proteomes" id="UP000000803">
    <property type="component" value="Chromosome 3R"/>
</dbReference>
<dbReference type="Bgee" id="FBgn0013278">
    <property type="expression patterns" value="Expressed in adult oenocyte (Drosophila) in adult thorax and 185 other cell types or tissues"/>
</dbReference>
<dbReference type="ExpressionAtlas" id="Q9BIR7">
    <property type="expression patterns" value="baseline and differential"/>
</dbReference>
<dbReference type="GO" id="GO:0005737">
    <property type="term" value="C:cytoplasm"/>
    <property type="evidence" value="ECO:0000318"/>
    <property type="project" value="GO_Central"/>
</dbReference>
<dbReference type="GO" id="GO:0005829">
    <property type="term" value="C:cytosol"/>
    <property type="evidence" value="ECO:0000318"/>
    <property type="project" value="GO_Central"/>
</dbReference>
<dbReference type="GO" id="GO:0005634">
    <property type="term" value="C:nucleus"/>
    <property type="evidence" value="ECO:0000318"/>
    <property type="project" value="GO_Central"/>
</dbReference>
<dbReference type="GO" id="GO:0005886">
    <property type="term" value="C:plasma membrane"/>
    <property type="evidence" value="ECO:0000318"/>
    <property type="project" value="GO_Central"/>
</dbReference>
<dbReference type="GO" id="GO:0005524">
    <property type="term" value="F:ATP binding"/>
    <property type="evidence" value="ECO:0007669"/>
    <property type="project" value="UniProtKB-KW"/>
</dbReference>
<dbReference type="GO" id="GO:0016887">
    <property type="term" value="F:ATP hydrolysis activity"/>
    <property type="evidence" value="ECO:0000318"/>
    <property type="project" value="GO_Central"/>
</dbReference>
<dbReference type="GO" id="GO:0140662">
    <property type="term" value="F:ATP-dependent protein folding chaperone"/>
    <property type="evidence" value="ECO:0007669"/>
    <property type="project" value="InterPro"/>
</dbReference>
<dbReference type="GO" id="GO:0031072">
    <property type="term" value="F:heat shock protein binding"/>
    <property type="evidence" value="ECO:0000318"/>
    <property type="project" value="GO_Central"/>
</dbReference>
<dbReference type="GO" id="GO:0044183">
    <property type="term" value="F:protein folding chaperone"/>
    <property type="evidence" value="ECO:0000318"/>
    <property type="project" value="GO_Central"/>
</dbReference>
<dbReference type="GO" id="GO:0051085">
    <property type="term" value="P:chaperone cofactor-dependent protein refolding"/>
    <property type="evidence" value="ECO:0000318"/>
    <property type="project" value="GO_Central"/>
</dbReference>
<dbReference type="GO" id="GO:0035080">
    <property type="term" value="P:heat shock-mediated polytene chromosome puffing"/>
    <property type="evidence" value="ECO:0000315"/>
    <property type="project" value="FlyBase"/>
</dbReference>
<dbReference type="GO" id="GO:0042026">
    <property type="term" value="P:protein refolding"/>
    <property type="evidence" value="ECO:0000318"/>
    <property type="project" value="GO_Central"/>
</dbReference>
<dbReference type="GO" id="GO:0009408">
    <property type="term" value="P:response to heat"/>
    <property type="evidence" value="ECO:0000315"/>
    <property type="project" value="FlyBase"/>
</dbReference>
<dbReference type="GO" id="GO:0001666">
    <property type="term" value="P:response to hypoxia"/>
    <property type="evidence" value="ECO:0000315"/>
    <property type="project" value="FlyBase"/>
</dbReference>
<dbReference type="GO" id="GO:0009636">
    <property type="term" value="P:response to toxic substance"/>
    <property type="evidence" value="ECO:0000270"/>
    <property type="project" value="FlyBase"/>
</dbReference>
<dbReference type="GO" id="GO:0006986">
    <property type="term" value="P:response to unfolded protein"/>
    <property type="evidence" value="ECO:0000303"/>
    <property type="project" value="UniProtKB"/>
</dbReference>
<dbReference type="CDD" id="cd10233">
    <property type="entry name" value="ASKHA_NBD_HSP70_HSPA1"/>
    <property type="match status" value="1"/>
</dbReference>
<dbReference type="FunFam" id="2.60.34.10:FF:000002">
    <property type="entry name" value="Heat shock 70 kDa"/>
    <property type="match status" value="1"/>
</dbReference>
<dbReference type="FunFam" id="3.90.640.10:FF:000002">
    <property type="entry name" value="Heat shock 70 kDa"/>
    <property type="match status" value="1"/>
</dbReference>
<dbReference type="FunFam" id="3.30.420.40:FF:000172">
    <property type="entry name" value="Heat shock 70 kDa protein"/>
    <property type="match status" value="1"/>
</dbReference>
<dbReference type="FunFam" id="3.30.30.30:FF:000001">
    <property type="entry name" value="heat shock 70 kDa protein-like"/>
    <property type="match status" value="1"/>
</dbReference>
<dbReference type="FunFam" id="1.20.1270.10:FF:000024">
    <property type="entry name" value="Heat shock protein 70"/>
    <property type="match status" value="1"/>
</dbReference>
<dbReference type="FunFam" id="3.30.420.40:FF:000026">
    <property type="entry name" value="Heat shock protein 70"/>
    <property type="match status" value="1"/>
</dbReference>
<dbReference type="Gene3D" id="1.20.1270.10">
    <property type="match status" value="1"/>
</dbReference>
<dbReference type="Gene3D" id="3.30.30.30">
    <property type="match status" value="1"/>
</dbReference>
<dbReference type="Gene3D" id="3.30.420.40">
    <property type="match status" value="2"/>
</dbReference>
<dbReference type="Gene3D" id="3.90.640.10">
    <property type="entry name" value="Actin, Chain A, domain 4"/>
    <property type="match status" value="1"/>
</dbReference>
<dbReference type="Gene3D" id="2.60.34.10">
    <property type="entry name" value="Substrate Binding Domain Of DNAk, Chain A, domain 1"/>
    <property type="match status" value="1"/>
</dbReference>
<dbReference type="InterPro" id="IPR043129">
    <property type="entry name" value="ATPase_NBD"/>
</dbReference>
<dbReference type="InterPro" id="IPR018181">
    <property type="entry name" value="Heat_shock_70_CS"/>
</dbReference>
<dbReference type="InterPro" id="IPR029048">
    <property type="entry name" value="HSP70_C_sf"/>
</dbReference>
<dbReference type="InterPro" id="IPR029047">
    <property type="entry name" value="HSP70_peptide-bd_sf"/>
</dbReference>
<dbReference type="InterPro" id="IPR013126">
    <property type="entry name" value="Hsp_70_fam"/>
</dbReference>
<dbReference type="NCBIfam" id="NF001413">
    <property type="entry name" value="PRK00290.1"/>
    <property type="match status" value="1"/>
</dbReference>
<dbReference type="PANTHER" id="PTHR19375">
    <property type="entry name" value="HEAT SHOCK PROTEIN 70KDA"/>
    <property type="match status" value="1"/>
</dbReference>
<dbReference type="Pfam" id="PF00012">
    <property type="entry name" value="HSP70"/>
    <property type="match status" value="1"/>
</dbReference>
<dbReference type="PRINTS" id="PR00301">
    <property type="entry name" value="HEATSHOCK70"/>
</dbReference>
<dbReference type="SUPFAM" id="SSF53067">
    <property type="entry name" value="Actin-like ATPase domain"/>
    <property type="match status" value="2"/>
</dbReference>
<dbReference type="SUPFAM" id="SSF100934">
    <property type="entry name" value="Heat shock protein 70kD (HSP70), C-terminal subdomain"/>
    <property type="match status" value="1"/>
</dbReference>
<dbReference type="SUPFAM" id="SSF100920">
    <property type="entry name" value="Heat shock protein 70kD (HSP70), peptide-binding domain"/>
    <property type="match status" value="1"/>
</dbReference>
<dbReference type="PROSITE" id="PS00297">
    <property type="entry name" value="HSP70_1"/>
    <property type="match status" value="1"/>
</dbReference>
<dbReference type="PROSITE" id="PS00329">
    <property type="entry name" value="HSP70_2"/>
    <property type="match status" value="1"/>
</dbReference>
<dbReference type="PROSITE" id="PS01036">
    <property type="entry name" value="HSP70_3"/>
    <property type="match status" value="1"/>
</dbReference>
<accession>Q9BIR7</accession>
<accession>P02824</accession>
<accession>Q53XF0</accession>
<accession>Q9BIR8</accession>
<accession>Q9BIR9</accession>
<accession>Q9BIS0</accession>
<accession>Q9I7J6</accession>
<evidence type="ECO:0000256" key="1">
    <source>
        <dbReference type="SAM" id="MobiDB-lite"/>
    </source>
</evidence>
<evidence type="ECO:0000269" key="2">
    <source>
    </source>
</evidence>
<evidence type="ECO:0000269" key="3">
    <source>
    </source>
</evidence>
<evidence type="ECO:0000305" key="4"/>
<reference key="1">
    <citation type="journal article" date="2002" name="J. Mol. Evol.">
        <title>Rapid concerted evolution via gene conversion at the Drosophila hsp70 genes.</title>
        <authorList>
            <person name="Bettencourt B.R."/>
            <person name="Feder M.E."/>
        </authorList>
    </citation>
    <scope>NUCLEOTIDE SEQUENCE [GENOMIC DNA]</scope>
    <source>
        <strain>3CPA126</strain>
        <strain>3CPA2</strain>
        <strain>3CPA35</strain>
        <strain>3CPA43</strain>
        <strain>3CPA47</strain>
        <strain>3CPA61</strain>
        <strain>3CPA81</strain>
        <strain>3CPA86</strain>
        <strain>AUS</strain>
        <strain>B28</strain>
        <strain>FrV3-1</strain>
        <strain>QD18</strain>
        <strain>Z(H)1</strain>
    </source>
</reference>
<reference key="2">
    <citation type="journal article" date="2000" name="Science">
        <title>The genome sequence of Drosophila melanogaster.</title>
        <authorList>
            <person name="Adams M.D."/>
            <person name="Celniker S.E."/>
            <person name="Holt R.A."/>
            <person name="Evans C.A."/>
            <person name="Gocayne J.D."/>
            <person name="Amanatides P.G."/>
            <person name="Scherer S.E."/>
            <person name="Li P.W."/>
            <person name="Hoskins R.A."/>
            <person name="Galle R.F."/>
            <person name="George R.A."/>
            <person name="Lewis S.E."/>
            <person name="Richards S."/>
            <person name="Ashburner M."/>
            <person name="Henderson S.N."/>
            <person name="Sutton G.G."/>
            <person name="Wortman J.R."/>
            <person name="Yandell M.D."/>
            <person name="Zhang Q."/>
            <person name="Chen L.X."/>
            <person name="Brandon R.C."/>
            <person name="Rogers Y.-H.C."/>
            <person name="Blazej R.G."/>
            <person name="Champe M."/>
            <person name="Pfeiffer B.D."/>
            <person name="Wan K.H."/>
            <person name="Doyle C."/>
            <person name="Baxter E.G."/>
            <person name="Helt G."/>
            <person name="Nelson C.R."/>
            <person name="Miklos G.L.G."/>
            <person name="Abril J.F."/>
            <person name="Agbayani A."/>
            <person name="An H.-J."/>
            <person name="Andrews-Pfannkoch C."/>
            <person name="Baldwin D."/>
            <person name="Ballew R.M."/>
            <person name="Basu A."/>
            <person name="Baxendale J."/>
            <person name="Bayraktaroglu L."/>
            <person name="Beasley E.M."/>
            <person name="Beeson K.Y."/>
            <person name="Benos P.V."/>
            <person name="Berman B.P."/>
            <person name="Bhandari D."/>
            <person name="Bolshakov S."/>
            <person name="Borkova D."/>
            <person name="Botchan M.R."/>
            <person name="Bouck J."/>
            <person name="Brokstein P."/>
            <person name="Brottier P."/>
            <person name="Burtis K.C."/>
            <person name="Busam D.A."/>
            <person name="Butler H."/>
            <person name="Cadieu E."/>
            <person name="Center A."/>
            <person name="Chandra I."/>
            <person name="Cherry J.M."/>
            <person name="Cawley S."/>
            <person name="Dahlke C."/>
            <person name="Davenport L.B."/>
            <person name="Davies P."/>
            <person name="de Pablos B."/>
            <person name="Delcher A."/>
            <person name="Deng Z."/>
            <person name="Mays A.D."/>
            <person name="Dew I."/>
            <person name="Dietz S.M."/>
            <person name="Dodson K."/>
            <person name="Doup L.E."/>
            <person name="Downes M."/>
            <person name="Dugan-Rocha S."/>
            <person name="Dunkov B.C."/>
            <person name="Dunn P."/>
            <person name="Durbin K.J."/>
            <person name="Evangelista C.C."/>
            <person name="Ferraz C."/>
            <person name="Ferriera S."/>
            <person name="Fleischmann W."/>
            <person name="Fosler C."/>
            <person name="Gabrielian A.E."/>
            <person name="Garg N.S."/>
            <person name="Gelbart W.M."/>
            <person name="Glasser K."/>
            <person name="Glodek A."/>
            <person name="Gong F."/>
            <person name="Gorrell J.H."/>
            <person name="Gu Z."/>
            <person name="Guan P."/>
            <person name="Harris M."/>
            <person name="Harris N.L."/>
            <person name="Harvey D.A."/>
            <person name="Heiman T.J."/>
            <person name="Hernandez J.R."/>
            <person name="Houck J."/>
            <person name="Hostin D."/>
            <person name="Houston K.A."/>
            <person name="Howland T.J."/>
            <person name="Wei M.-H."/>
            <person name="Ibegwam C."/>
            <person name="Jalali M."/>
            <person name="Kalush F."/>
            <person name="Karpen G.H."/>
            <person name="Ke Z."/>
            <person name="Kennison J.A."/>
            <person name="Ketchum K.A."/>
            <person name="Kimmel B.E."/>
            <person name="Kodira C.D."/>
            <person name="Kraft C.L."/>
            <person name="Kravitz S."/>
            <person name="Kulp D."/>
            <person name="Lai Z."/>
            <person name="Lasko P."/>
            <person name="Lei Y."/>
            <person name="Levitsky A.A."/>
            <person name="Li J.H."/>
            <person name="Li Z."/>
            <person name="Liang Y."/>
            <person name="Lin X."/>
            <person name="Liu X."/>
            <person name="Mattei B."/>
            <person name="McIntosh T.C."/>
            <person name="McLeod M.P."/>
            <person name="McPherson D."/>
            <person name="Merkulov G."/>
            <person name="Milshina N.V."/>
            <person name="Mobarry C."/>
            <person name="Morris J."/>
            <person name="Moshrefi A."/>
            <person name="Mount S.M."/>
            <person name="Moy M."/>
            <person name="Murphy B."/>
            <person name="Murphy L."/>
            <person name="Muzny D.M."/>
            <person name="Nelson D.L."/>
            <person name="Nelson D.R."/>
            <person name="Nelson K.A."/>
            <person name="Nixon K."/>
            <person name="Nusskern D.R."/>
            <person name="Pacleb J.M."/>
            <person name="Palazzolo M."/>
            <person name="Pittman G.S."/>
            <person name="Pan S."/>
            <person name="Pollard J."/>
            <person name="Puri V."/>
            <person name="Reese M.G."/>
            <person name="Reinert K."/>
            <person name="Remington K."/>
            <person name="Saunders R.D.C."/>
            <person name="Scheeler F."/>
            <person name="Shen H."/>
            <person name="Shue B.C."/>
            <person name="Siden-Kiamos I."/>
            <person name="Simpson M."/>
            <person name="Skupski M.P."/>
            <person name="Smith T.J."/>
            <person name="Spier E."/>
            <person name="Spradling A.C."/>
            <person name="Stapleton M."/>
            <person name="Strong R."/>
            <person name="Sun E."/>
            <person name="Svirskas R."/>
            <person name="Tector C."/>
            <person name="Turner R."/>
            <person name="Venter E."/>
            <person name="Wang A.H."/>
            <person name="Wang X."/>
            <person name="Wang Z.-Y."/>
            <person name="Wassarman D.A."/>
            <person name="Weinstock G.M."/>
            <person name="Weissenbach J."/>
            <person name="Williams S.M."/>
            <person name="Woodage T."/>
            <person name="Worley K.C."/>
            <person name="Wu D."/>
            <person name="Yang S."/>
            <person name="Yao Q.A."/>
            <person name="Ye J."/>
            <person name="Yeh R.-F."/>
            <person name="Zaveri J.S."/>
            <person name="Zhan M."/>
            <person name="Zhang G."/>
            <person name="Zhao Q."/>
            <person name="Zheng L."/>
            <person name="Zheng X.H."/>
            <person name="Zhong F.N."/>
            <person name="Zhong W."/>
            <person name="Zhou X."/>
            <person name="Zhu S.C."/>
            <person name="Zhu X."/>
            <person name="Smith H.O."/>
            <person name="Gibbs R.A."/>
            <person name="Myers E.W."/>
            <person name="Rubin G.M."/>
            <person name="Venter J.C."/>
        </authorList>
    </citation>
    <scope>NUCLEOTIDE SEQUENCE [LARGE SCALE GENOMIC DNA]</scope>
    <source>
        <strain>Berkeley</strain>
    </source>
</reference>
<reference key="3">
    <citation type="journal article" date="2002" name="Genome Biol.">
        <title>Annotation of the Drosophila melanogaster euchromatic genome: a systematic review.</title>
        <authorList>
            <person name="Misra S."/>
            <person name="Crosby M.A."/>
            <person name="Mungall C.J."/>
            <person name="Matthews B.B."/>
            <person name="Campbell K.S."/>
            <person name="Hradecky P."/>
            <person name="Huang Y."/>
            <person name="Kaminker J.S."/>
            <person name="Millburn G.H."/>
            <person name="Prochnik S.E."/>
            <person name="Smith C.D."/>
            <person name="Tupy J.L."/>
            <person name="Whitfield E.J."/>
            <person name="Bayraktaroglu L."/>
            <person name="Berman B.P."/>
            <person name="Bettencourt B.R."/>
            <person name="Celniker S.E."/>
            <person name="de Grey A.D.N.J."/>
            <person name="Drysdale R.A."/>
            <person name="Harris N.L."/>
            <person name="Richter J."/>
            <person name="Russo S."/>
            <person name="Schroeder A.J."/>
            <person name="Shu S.Q."/>
            <person name="Stapleton M."/>
            <person name="Yamada C."/>
            <person name="Ashburner M."/>
            <person name="Gelbart W.M."/>
            <person name="Rubin G.M."/>
            <person name="Lewis S.E."/>
        </authorList>
    </citation>
    <scope>GENOME REANNOTATION</scope>
    <source>
        <strain>Berkeley</strain>
    </source>
</reference>
<reference key="4">
    <citation type="submission" date="2004-02" db="EMBL/GenBank/DDBJ databases">
        <authorList>
            <person name="Stapleton M."/>
            <person name="Carlson J.W."/>
            <person name="Chavez C."/>
            <person name="Frise E."/>
            <person name="George R.A."/>
            <person name="Pacleb J.M."/>
            <person name="Park S."/>
            <person name="Wan K.H."/>
            <person name="Yu C."/>
            <person name="Rubin G.M."/>
            <person name="Celniker S.E."/>
        </authorList>
    </citation>
    <scope>NUCLEOTIDE SEQUENCE [LARGE SCALE MRNA]</scope>
    <source>
        <strain>Berkeley</strain>
        <tissue>Larva</tissue>
        <tissue>Pupae</tissue>
    </source>
</reference>
<reference key="5">
    <citation type="journal article" date="1980" name="Cell">
        <title>Sequence of three copies of the gene for the major Drosophila heat shock induced protein and their flanking regions.</title>
        <authorList>
            <person name="Ingolia T.D."/>
            <person name="Craig E.A."/>
            <person name="McCarthy B.J."/>
        </authorList>
    </citation>
    <scope>NUCLEOTIDE SEQUENCE [GENOMIC DNA] OF 1-11</scope>
</reference>
<reference key="6">
    <citation type="journal article" date="2001" name="J. Cell Sci.">
        <title>The Drosophila Dpit47 protein is a nuclear Hsp90 co-chaperone that interacts with DNA polymerase alpha.</title>
        <authorList>
            <person name="Crevel G."/>
            <person name="Bates H."/>
            <person name="Huikeshoven H."/>
            <person name="Cotterill S."/>
        </authorList>
    </citation>
    <scope>INTERACTION WITH DPIT47 AND HSP83</scope>
</reference>
<reference key="7">
    <citation type="journal article" date="2008" name="Nature">
        <title>NAD synthase NMNAT acts as a chaperone to protect against neurodegeneration.</title>
        <authorList>
            <person name="Zhai R.G."/>
            <person name="Zhang F."/>
            <person name="Hiesinger P.R."/>
            <person name="Cao Y."/>
            <person name="Haueter C.M."/>
            <person name="Bellen H.J."/>
        </authorList>
    </citation>
    <scope>FUNCTION</scope>
    <scope>INDUCTION BY PROTEOTOXIC STRESS</scope>
</reference>